<feature type="transit peptide" description="Mitochondrion" evidence="2">
    <location>
        <begin position="1"/>
        <end position="16"/>
    </location>
</feature>
<feature type="chain" id="PRO_0000453180" description="Single-stranded DNA-binding protein, mitochondrial" evidence="2">
    <location>
        <begin position="17"/>
        <end position="146"/>
    </location>
</feature>
<feature type="domain" description="SSB" evidence="3">
    <location>
        <begin position="29"/>
        <end position="140"/>
    </location>
</feature>
<feature type="mutagenesis site" description="Reduction in retinal atoh7 expression." evidence="4">
    <original>R</original>
    <variation>Q</variation>
    <location>
        <position position="37"/>
    </location>
</feature>
<feature type="mutagenesis site" description="Reduction in retinal atoh7 expression." evidence="4">
    <original>R</original>
    <variation>Q</variation>
    <location>
        <position position="106"/>
    </location>
</feature>
<feature type="mutagenesis site" description="Reduction in retinal atoh7 expression." evidence="4">
    <original>S</original>
    <variation>N</variation>
    <location>
        <position position="140"/>
    </location>
</feature>
<feature type="sequence conflict" description="In Ref. 2; AAH92875/AAI64281." evidence="6" ref="2">
    <original>N</original>
    <variation>Y</variation>
    <location>
        <position position="4"/>
    </location>
</feature>
<feature type="sequence conflict" description="In Ref. 2; AAH92875/AAI64281." evidence="6" ref="2">
    <original>H</original>
    <variation>Q</variation>
    <location>
        <position position="16"/>
    </location>
</feature>
<keyword id="KW-0235">DNA replication</keyword>
<keyword id="KW-0238">DNA-binding</keyword>
<keyword id="KW-0496">Mitochondrion</keyword>
<keyword id="KW-1135">Mitochondrion nucleoid</keyword>
<keyword id="KW-1185">Reference proteome</keyword>
<keyword id="KW-0809">Transit peptide</keyword>
<dbReference type="EMBL" id="BX546489">
    <property type="status" value="NOT_ANNOTATED_CDS"/>
    <property type="molecule type" value="Genomic_DNA"/>
</dbReference>
<dbReference type="EMBL" id="BC092875">
    <property type="protein sequence ID" value="AAH92875.1"/>
    <property type="molecule type" value="mRNA"/>
</dbReference>
<dbReference type="EMBL" id="BC164281">
    <property type="protein sequence ID" value="AAI64281.1"/>
    <property type="molecule type" value="mRNA"/>
</dbReference>
<dbReference type="RefSeq" id="NP_001017806.1">
    <property type="nucleotide sequence ID" value="NM_001017806.1"/>
</dbReference>
<dbReference type="SMR" id="B8A5I7"/>
<dbReference type="FunCoup" id="B8A5I7">
    <property type="interactions" value="919"/>
</dbReference>
<dbReference type="STRING" id="7955.ENSDARP00000057506"/>
<dbReference type="PaxDb" id="7955-ENSDARP00000057506"/>
<dbReference type="PeptideAtlas" id="B8A5I7"/>
<dbReference type="Ensembl" id="ENSDART00000057507">
    <property type="protein sequence ID" value="ENSDARP00000057506"/>
    <property type="gene ID" value="ENSDARG00000039350"/>
</dbReference>
<dbReference type="Ensembl" id="ENSDART00000193929">
    <property type="protein sequence ID" value="ENSDARP00000157021"/>
    <property type="gene ID" value="ENSDARG00000039350"/>
</dbReference>
<dbReference type="GeneID" id="550504"/>
<dbReference type="KEGG" id="dre:550504"/>
<dbReference type="AGR" id="ZFIN:ZDB-GENE-050417-340"/>
<dbReference type="CTD" id="6742"/>
<dbReference type="ZFIN" id="ZDB-GENE-050417-340">
    <property type="gene designation" value="ssbp1"/>
</dbReference>
<dbReference type="eggNOG" id="KOG1653">
    <property type="taxonomic scope" value="Eukaryota"/>
</dbReference>
<dbReference type="HOGENOM" id="CLU_078758_2_1_1"/>
<dbReference type="InParanoid" id="B8A5I7"/>
<dbReference type="OMA" id="KTQWHRI"/>
<dbReference type="OrthoDB" id="1078367at2759"/>
<dbReference type="PhylomeDB" id="B8A5I7"/>
<dbReference type="TreeFam" id="TF314629"/>
<dbReference type="PRO" id="PR:B8A5I7"/>
<dbReference type="Proteomes" id="UP000000437">
    <property type="component" value="Chromosome 4"/>
</dbReference>
<dbReference type="Bgee" id="ENSDARG00000039350">
    <property type="expression patterns" value="Expressed in somite and 27 other cell types or tissues"/>
</dbReference>
<dbReference type="GO" id="GO:0042645">
    <property type="term" value="C:mitochondrial nucleoid"/>
    <property type="evidence" value="ECO:0000318"/>
    <property type="project" value="GO_Central"/>
</dbReference>
<dbReference type="GO" id="GO:0008047">
    <property type="term" value="F:enzyme activator activity"/>
    <property type="evidence" value="ECO:0000318"/>
    <property type="project" value="GO_Central"/>
</dbReference>
<dbReference type="GO" id="GO:0003697">
    <property type="term" value="F:single-stranded DNA binding"/>
    <property type="evidence" value="ECO:0000318"/>
    <property type="project" value="GO_Central"/>
</dbReference>
<dbReference type="GO" id="GO:0006260">
    <property type="term" value="P:DNA replication"/>
    <property type="evidence" value="ECO:0000318"/>
    <property type="project" value="GO_Central"/>
</dbReference>
<dbReference type="GO" id="GO:0000002">
    <property type="term" value="P:mitochondrial genome maintenance"/>
    <property type="evidence" value="ECO:0000318"/>
    <property type="project" value="GO_Central"/>
</dbReference>
<dbReference type="GO" id="GO:0090297">
    <property type="term" value="P:positive regulation of mitochondrial DNA replication"/>
    <property type="evidence" value="ECO:0000318"/>
    <property type="project" value="GO_Central"/>
</dbReference>
<dbReference type="CDD" id="cd04496">
    <property type="entry name" value="SSB_OBF"/>
    <property type="match status" value="1"/>
</dbReference>
<dbReference type="FunFam" id="2.40.50.140:FF:000129">
    <property type="entry name" value="Single-stranded DNA-binding protein 1, mitochondrial"/>
    <property type="match status" value="1"/>
</dbReference>
<dbReference type="Gene3D" id="2.40.50.140">
    <property type="entry name" value="Nucleic acid-binding proteins"/>
    <property type="match status" value="1"/>
</dbReference>
<dbReference type="HAMAP" id="MF_00984">
    <property type="entry name" value="SSB"/>
    <property type="match status" value="1"/>
</dbReference>
<dbReference type="InterPro" id="IPR012340">
    <property type="entry name" value="NA-bd_OB-fold"/>
</dbReference>
<dbReference type="InterPro" id="IPR000424">
    <property type="entry name" value="Primosome_PriB/ssb"/>
</dbReference>
<dbReference type="InterPro" id="IPR011344">
    <property type="entry name" value="ssDNA-bd"/>
</dbReference>
<dbReference type="NCBIfam" id="TIGR00621">
    <property type="entry name" value="ssb"/>
    <property type="match status" value="1"/>
</dbReference>
<dbReference type="PANTHER" id="PTHR10302">
    <property type="entry name" value="SINGLE-STRANDED DNA-BINDING PROTEIN"/>
    <property type="match status" value="1"/>
</dbReference>
<dbReference type="PANTHER" id="PTHR10302:SF0">
    <property type="entry name" value="SINGLE-STRANDED DNA-BINDING PROTEIN, MITOCHONDRIAL"/>
    <property type="match status" value="1"/>
</dbReference>
<dbReference type="Pfam" id="PF00436">
    <property type="entry name" value="SSB"/>
    <property type="match status" value="1"/>
</dbReference>
<dbReference type="SUPFAM" id="SSF50249">
    <property type="entry name" value="Nucleic acid-binding proteins"/>
    <property type="match status" value="1"/>
</dbReference>
<dbReference type="PROSITE" id="PS50935">
    <property type="entry name" value="SSB"/>
    <property type="match status" value="1"/>
</dbReference>
<name>SSBP_DANRE</name>
<sequence length="146" mass="16598">MLRNASAQILKQFVRHRTTDASLTLEKSINKVQILGRVGQDPVMRQVEGRNPVTIFSMATNEMWRSGEGEPVGAGDVTQKTTWHRISVFKPGLRDVAYQYVKKGSRIFVEGKLDYGEYVDKNNVRRQATTIIADNIVFLSENLRDQ</sequence>
<protein>
    <recommendedName>
        <fullName evidence="6">Single-stranded DNA-binding protein, mitochondrial</fullName>
        <shortName evidence="6">Mt-SSB</shortName>
        <shortName evidence="6">MtSSB</shortName>
    </recommendedName>
</protein>
<gene>
    <name evidence="10" type="primary">ssbp1</name>
    <name evidence="7" type="ORF">zgc:110325</name>
</gene>
<proteinExistence type="evidence at protein level"/>
<organism evidence="9">
    <name type="scientific">Danio rerio</name>
    <name type="common">Zebrafish</name>
    <name type="synonym">Brachydanio rerio</name>
    <dbReference type="NCBI Taxonomy" id="7955"/>
    <lineage>
        <taxon>Eukaryota</taxon>
        <taxon>Metazoa</taxon>
        <taxon>Chordata</taxon>
        <taxon>Craniata</taxon>
        <taxon>Vertebrata</taxon>
        <taxon>Euteleostomi</taxon>
        <taxon>Actinopterygii</taxon>
        <taxon>Neopterygii</taxon>
        <taxon>Teleostei</taxon>
        <taxon>Ostariophysi</taxon>
        <taxon>Cypriniformes</taxon>
        <taxon>Danionidae</taxon>
        <taxon>Danioninae</taxon>
        <taxon>Danio</taxon>
    </lineage>
</organism>
<comment type="function">
    <text evidence="1 4 5">Binds preferentially and cooperatively to pyrimidine rich single-stranded DNA (ss-DNA) (By similarity). May be required to maintain the copy number of mitochondrial DNA (mtDNA) and play a crucial role during mtDNA replication (PubMed:31550240). Required for retinal ganglion cell differentiation and retinal integrity (PubMed:31298765).</text>
</comment>
<comment type="subcellular location">
    <subcellularLocation>
        <location evidence="1">Mitochondrion</location>
    </subcellularLocation>
    <subcellularLocation>
        <location evidence="1">Mitochondrion matrix</location>
        <location evidence="1">Mitochondrion nucleoid</location>
    </subcellularLocation>
</comment>
<comment type="disruption phenotype">
    <text evidence="4 5">Morpholino-induced knockdown results in reduction in optic nerve size and mitochondrial depletion (PubMed:31298765, PubMed:31550240). Strongly reduced expression of the developmental regulator genes isl1 and atoh7 in retinal ganglion cell (RGC) precursors (PubMed:31298765). Nonphotoreceptor cells, both in the ganglion cell layer and in the inner nuclear layer, display compromised neuronal specification, whereas cell numbers in both layers are unaltered (PubMed:31298765).</text>
</comment>
<reference evidence="9" key="1">
    <citation type="journal article" date="2013" name="Nature">
        <title>The zebrafish reference genome sequence and its relationship to the human genome.</title>
        <authorList>
            <person name="Howe K."/>
            <person name="Clark M.D."/>
            <person name="Torroja C.F."/>
            <person name="Torrance J."/>
            <person name="Berthelot C."/>
            <person name="Muffato M."/>
            <person name="Collins J.E."/>
            <person name="Humphray S."/>
            <person name="McLaren K."/>
            <person name="Matthews L."/>
            <person name="McLaren S."/>
            <person name="Sealy I."/>
            <person name="Caccamo M."/>
            <person name="Churcher C."/>
            <person name="Scott C."/>
            <person name="Barrett J.C."/>
            <person name="Koch R."/>
            <person name="Rauch G.J."/>
            <person name="White S."/>
            <person name="Chow W."/>
            <person name="Kilian B."/>
            <person name="Quintais L.T."/>
            <person name="Guerra-Assuncao J.A."/>
            <person name="Zhou Y."/>
            <person name="Gu Y."/>
            <person name="Yen J."/>
            <person name="Vogel J.H."/>
            <person name="Eyre T."/>
            <person name="Redmond S."/>
            <person name="Banerjee R."/>
            <person name="Chi J."/>
            <person name="Fu B."/>
            <person name="Langley E."/>
            <person name="Maguire S.F."/>
            <person name="Laird G.K."/>
            <person name="Lloyd D."/>
            <person name="Kenyon E."/>
            <person name="Donaldson S."/>
            <person name="Sehra H."/>
            <person name="Almeida-King J."/>
            <person name="Loveland J."/>
            <person name="Trevanion S."/>
            <person name="Jones M."/>
            <person name="Quail M."/>
            <person name="Willey D."/>
            <person name="Hunt A."/>
            <person name="Burton J."/>
            <person name="Sims S."/>
            <person name="McLay K."/>
            <person name="Plumb B."/>
            <person name="Davis J."/>
            <person name="Clee C."/>
            <person name="Oliver K."/>
            <person name="Clark R."/>
            <person name="Riddle C."/>
            <person name="Elliot D."/>
            <person name="Threadgold G."/>
            <person name="Harden G."/>
            <person name="Ware D."/>
            <person name="Begum S."/>
            <person name="Mortimore B."/>
            <person name="Kerry G."/>
            <person name="Heath P."/>
            <person name="Phillimore B."/>
            <person name="Tracey A."/>
            <person name="Corby N."/>
            <person name="Dunn M."/>
            <person name="Johnson C."/>
            <person name="Wood J."/>
            <person name="Clark S."/>
            <person name="Pelan S."/>
            <person name="Griffiths G."/>
            <person name="Smith M."/>
            <person name="Glithero R."/>
            <person name="Howden P."/>
            <person name="Barker N."/>
            <person name="Lloyd C."/>
            <person name="Stevens C."/>
            <person name="Harley J."/>
            <person name="Holt K."/>
            <person name="Panagiotidis G."/>
            <person name="Lovell J."/>
            <person name="Beasley H."/>
            <person name="Henderson C."/>
            <person name="Gordon D."/>
            <person name="Auger K."/>
            <person name="Wright D."/>
            <person name="Collins J."/>
            <person name="Raisen C."/>
            <person name="Dyer L."/>
            <person name="Leung K."/>
            <person name="Robertson L."/>
            <person name="Ambridge K."/>
            <person name="Leongamornlert D."/>
            <person name="McGuire S."/>
            <person name="Gilderthorp R."/>
            <person name="Griffiths C."/>
            <person name="Manthravadi D."/>
            <person name="Nichol S."/>
            <person name="Barker G."/>
            <person name="Whitehead S."/>
            <person name="Kay M."/>
            <person name="Brown J."/>
            <person name="Murnane C."/>
            <person name="Gray E."/>
            <person name="Humphries M."/>
            <person name="Sycamore N."/>
            <person name="Barker D."/>
            <person name="Saunders D."/>
            <person name="Wallis J."/>
            <person name="Babbage A."/>
            <person name="Hammond S."/>
            <person name="Mashreghi-Mohammadi M."/>
            <person name="Barr L."/>
            <person name="Martin S."/>
            <person name="Wray P."/>
            <person name="Ellington A."/>
            <person name="Matthews N."/>
            <person name="Ellwood M."/>
            <person name="Woodmansey R."/>
            <person name="Clark G."/>
            <person name="Cooper J."/>
            <person name="Tromans A."/>
            <person name="Grafham D."/>
            <person name="Skuce C."/>
            <person name="Pandian R."/>
            <person name="Andrews R."/>
            <person name="Harrison E."/>
            <person name="Kimberley A."/>
            <person name="Garnett J."/>
            <person name="Fosker N."/>
            <person name="Hall R."/>
            <person name="Garner P."/>
            <person name="Kelly D."/>
            <person name="Bird C."/>
            <person name="Palmer S."/>
            <person name="Gehring I."/>
            <person name="Berger A."/>
            <person name="Dooley C.M."/>
            <person name="Ersan-Urun Z."/>
            <person name="Eser C."/>
            <person name="Geiger H."/>
            <person name="Geisler M."/>
            <person name="Karotki L."/>
            <person name="Kirn A."/>
            <person name="Konantz J."/>
            <person name="Konantz M."/>
            <person name="Oberlander M."/>
            <person name="Rudolph-Geiger S."/>
            <person name="Teucke M."/>
            <person name="Lanz C."/>
            <person name="Raddatz G."/>
            <person name="Osoegawa K."/>
            <person name="Zhu B."/>
            <person name="Rapp A."/>
            <person name="Widaa S."/>
            <person name="Langford C."/>
            <person name="Yang F."/>
            <person name="Schuster S.C."/>
            <person name="Carter N.P."/>
            <person name="Harrow J."/>
            <person name="Ning Z."/>
            <person name="Herrero J."/>
            <person name="Searle S.M."/>
            <person name="Enright A."/>
            <person name="Geisler R."/>
            <person name="Plasterk R.H."/>
            <person name="Lee C."/>
            <person name="Westerfield M."/>
            <person name="de Jong P.J."/>
            <person name="Zon L.I."/>
            <person name="Postlethwait J.H."/>
            <person name="Nusslein-Volhard C."/>
            <person name="Hubbard T.J."/>
            <person name="Roest Crollius H."/>
            <person name="Rogers J."/>
            <person name="Stemple D.L."/>
        </authorList>
    </citation>
    <scope>NUCLEOTIDE SEQUENCE [LARGE SCALE GENOMIC DNA]</scope>
    <source>
        <strain evidence="9">Tuebingen</strain>
    </source>
</reference>
<reference evidence="7 8" key="2">
    <citation type="submission" date="2008-04" db="EMBL/GenBank/DDBJ databases">
        <authorList>
            <consortium name="NIH - Zebrafish Gene Collection (ZGC) project"/>
        </authorList>
    </citation>
    <scope>NUCLEOTIDE SEQUENCE [LARGE SCALE MRNA]</scope>
    <source>
        <tissue evidence="7">Olfactory epithelium</tissue>
    </source>
</reference>
<reference evidence="6" key="3">
    <citation type="journal article" date="2019" name="Ann. Neurol.">
        <title>SSBP1 mutations in dominant optic atrophy with variable retinal degeneration.</title>
        <authorList>
            <person name="Jurkute N."/>
            <person name="Leu C."/>
            <person name="Pogoda H.M."/>
            <person name="Arno G."/>
            <person name="Robson A.G."/>
            <person name="Nuernberg G."/>
            <person name="Altmueller J."/>
            <person name="Thiele H."/>
            <person name="Motameny S."/>
            <person name="Toliat M.R."/>
            <person name="Powell K."/>
            <person name="Hoehne W."/>
            <person name="Michaelides M."/>
            <person name="Webster A.R."/>
            <person name="Moore A.T."/>
            <person name="Hammerschmidt M."/>
            <person name="Nuernberg P."/>
            <person name="Yu-Wai-Man P."/>
            <person name="Votruba M."/>
        </authorList>
    </citation>
    <scope>FUNCTION</scope>
    <scope>DISRUPTION PHENOTYPE</scope>
    <scope>MUTAGENESIS OF ARG-37; ARG-106 AND SER-140</scope>
</reference>
<reference evidence="6" key="4">
    <citation type="journal article" date="2020" name="J. Clin. Invest.">
        <title>SSBP1 mutations cause mtDNA depletion underlying a complex optic atrophy disorder.</title>
        <authorList>
            <person name="Del Dotto V."/>
            <person name="Ullah F."/>
            <person name="Di Meo I."/>
            <person name="Magini P."/>
            <person name="Gusic M."/>
            <person name="Maresca A."/>
            <person name="Caporali L."/>
            <person name="Palombo F."/>
            <person name="Tagliavini F."/>
            <person name="Baugh E.H."/>
            <person name="Macao B."/>
            <person name="Szilagyi Z."/>
            <person name="Peron C."/>
            <person name="Gustafson M.A."/>
            <person name="Khan K."/>
            <person name="La Morgia C."/>
            <person name="Barboni P."/>
            <person name="Carbonelli M."/>
            <person name="Valentino M.L."/>
            <person name="Liguori R."/>
            <person name="Shashi V."/>
            <person name="Sullivan J."/>
            <person name="Nagaraj S."/>
            <person name="El-Dairi M."/>
            <person name="Iannaccone A."/>
            <person name="Cutcutache I."/>
            <person name="Bertini E."/>
            <person name="Carrozzo R."/>
            <person name="Emma F."/>
            <person name="Diomedi-Camassei F."/>
            <person name="Zanna C."/>
            <person name="Armstrong M."/>
            <person name="Page M."/>
            <person name="Stong N."/>
            <person name="Boesch S."/>
            <person name="Kopajtich R."/>
            <person name="Wortmann S."/>
            <person name="Sperl W."/>
            <person name="Davis E.E."/>
            <person name="Copeland W.C."/>
            <person name="Seri M."/>
            <person name="Falkenberg M."/>
            <person name="Prokisch H."/>
            <person name="Katsanis N."/>
            <person name="Tiranti V."/>
            <person name="Pippucci T."/>
            <person name="Carelli V."/>
        </authorList>
    </citation>
    <scope>FUNCTION</scope>
    <scope>DISRUPTION PHENOTYPE</scope>
</reference>
<evidence type="ECO:0000250" key="1">
    <source>
        <dbReference type="UniProtKB" id="Q04837"/>
    </source>
</evidence>
<evidence type="ECO:0000255" key="2"/>
<evidence type="ECO:0000255" key="3">
    <source>
        <dbReference type="PROSITE-ProRule" id="PRU00252"/>
    </source>
</evidence>
<evidence type="ECO:0000269" key="4">
    <source>
    </source>
</evidence>
<evidence type="ECO:0000269" key="5">
    <source>
    </source>
</evidence>
<evidence type="ECO:0000305" key="6"/>
<evidence type="ECO:0000312" key="7">
    <source>
        <dbReference type="EMBL" id="AAH92875.1"/>
    </source>
</evidence>
<evidence type="ECO:0000312" key="8">
    <source>
        <dbReference type="EMBL" id="AAI64281.1"/>
    </source>
</evidence>
<evidence type="ECO:0000312" key="9">
    <source>
        <dbReference type="Proteomes" id="UP000000437"/>
    </source>
</evidence>
<evidence type="ECO:0000312" key="10">
    <source>
        <dbReference type="ZFIN" id="ZDB-GENE-050417-340"/>
    </source>
</evidence>
<accession>B8A5I7</accession>
<accession>Q568F8</accession>